<dbReference type="EMBL" id="AP009179">
    <property type="protein sequence ID" value="BAF73279.1"/>
    <property type="molecule type" value="Genomic_DNA"/>
</dbReference>
<dbReference type="RefSeq" id="WP_008244830.1">
    <property type="nucleotide sequence ID" value="NC_009663.1"/>
</dbReference>
<dbReference type="SMR" id="A6QCS0"/>
<dbReference type="STRING" id="387093.SUN_2343"/>
<dbReference type="KEGG" id="sun:SUN_2343"/>
<dbReference type="eggNOG" id="COG0257">
    <property type="taxonomic scope" value="Bacteria"/>
</dbReference>
<dbReference type="HOGENOM" id="CLU_135723_6_2_7"/>
<dbReference type="OrthoDB" id="9802520at2"/>
<dbReference type="Proteomes" id="UP000006378">
    <property type="component" value="Chromosome"/>
</dbReference>
<dbReference type="GO" id="GO:0005737">
    <property type="term" value="C:cytoplasm"/>
    <property type="evidence" value="ECO:0007669"/>
    <property type="project" value="UniProtKB-ARBA"/>
</dbReference>
<dbReference type="GO" id="GO:1990904">
    <property type="term" value="C:ribonucleoprotein complex"/>
    <property type="evidence" value="ECO:0007669"/>
    <property type="project" value="UniProtKB-KW"/>
</dbReference>
<dbReference type="GO" id="GO:0005840">
    <property type="term" value="C:ribosome"/>
    <property type="evidence" value="ECO:0007669"/>
    <property type="project" value="UniProtKB-KW"/>
</dbReference>
<dbReference type="GO" id="GO:0003735">
    <property type="term" value="F:structural constituent of ribosome"/>
    <property type="evidence" value="ECO:0007669"/>
    <property type="project" value="InterPro"/>
</dbReference>
<dbReference type="GO" id="GO:0006412">
    <property type="term" value="P:translation"/>
    <property type="evidence" value="ECO:0007669"/>
    <property type="project" value="UniProtKB-UniRule"/>
</dbReference>
<dbReference type="HAMAP" id="MF_00251">
    <property type="entry name" value="Ribosomal_bL36"/>
    <property type="match status" value="1"/>
</dbReference>
<dbReference type="InterPro" id="IPR000473">
    <property type="entry name" value="Ribosomal_bL36"/>
</dbReference>
<dbReference type="InterPro" id="IPR035977">
    <property type="entry name" value="Ribosomal_bL36_sp"/>
</dbReference>
<dbReference type="NCBIfam" id="TIGR01022">
    <property type="entry name" value="rpmJ_bact"/>
    <property type="match status" value="1"/>
</dbReference>
<dbReference type="PANTHER" id="PTHR42888">
    <property type="entry name" value="50S RIBOSOMAL PROTEIN L36, CHLOROPLASTIC"/>
    <property type="match status" value="1"/>
</dbReference>
<dbReference type="PANTHER" id="PTHR42888:SF1">
    <property type="entry name" value="LARGE RIBOSOMAL SUBUNIT PROTEIN BL36C"/>
    <property type="match status" value="1"/>
</dbReference>
<dbReference type="Pfam" id="PF00444">
    <property type="entry name" value="Ribosomal_L36"/>
    <property type="match status" value="1"/>
</dbReference>
<dbReference type="SUPFAM" id="SSF57840">
    <property type="entry name" value="Ribosomal protein L36"/>
    <property type="match status" value="1"/>
</dbReference>
<dbReference type="PROSITE" id="PS00828">
    <property type="entry name" value="RIBOSOMAL_L36"/>
    <property type="match status" value="1"/>
</dbReference>
<protein>
    <recommendedName>
        <fullName evidence="1">Large ribosomal subunit protein bL36</fullName>
    </recommendedName>
    <alternativeName>
        <fullName evidence="2">50S ribosomal protein L36</fullName>
    </alternativeName>
</protein>
<evidence type="ECO:0000255" key="1">
    <source>
        <dbReference type="HAMAP-Rule" id="MF_00251"/>
    </source>
</evidence>
<evidence type="ECO:0000305" key="2"/>
<feature type="chain" id="PRO_1000003420" description="Large ribosomal subunit protein bL36">
    <location>
        <begin position="1"/>
        <end position="37"/>
    </location>
</feature>
<reference key="1">
    <citation type="journal article" date="2007" name="Proc. Natl. Acad. Sci. U.S.A.">
        <title>Deep-sea vent epsilon-proteobacterial genomes provide insights into emergence of pathogens.</title>
        <authorList>
            <person name="Nakagawa S."/>
            <person name="Takaki Y."/>
            <person name="Shimamura S."/>
            <person name="Reysenbach A.-L."/>
            <person name="Takai K."/>
            <person name="Horikoshi K."/>
        </authorList>
    </citation>
    <scope>NUCLEOTIDE SEQUENCE [LARGE SCALE GENOMIC DNA]</scope>
    <source>
        <strain>NBC37-1</strain>
    </source>
</reference>
<sequence length="37" mass="4336">MKVRPSVKKMCDDCKVIKRKGIVRVICKNPKHKQRQG</sequence>
<organism>
    <name type="scientific">Sulfurovum sp. (strain NBC37-1)</name>
    <dbReference type="NCBI Taxonomy" id="387093"/>
    <lineage>
        <taxon>Bacteria</taxon>
        <taxon>Pseudomonadati</taxon>
        <taxon>Campylobacterota</taxon>
        <taxon>Epsilonproteobacteria</taxon>
        <taxon>Campylobacterales</taxon>
        <taxon>Sulfurovaceae</taxon>
        <taxon>Sulfurovum</taxon>
    </lineage>
</organism>
<comment type="similarity">
    <text evidence="1">Belongs to the bacterial ribosomal protein bL36 family.</text>
</comment>
<accession>A6QCS0</accession>
<name>RL36_SULNB</name>
<proteinExistence type="inferred from homology"/>
<gene>
    <name evidence="1" type="primary">rpmJ</name>
    <name type="ordered locus">SUN_2343</name>
</gene>
<keyword id="KW-0687">Ribonucleoprotein</keyword>
<keyword id="KW-0689">Ribosomal protein</keyword>